<keyword id="KW-0966">Cell projection</keyword>
<keyword id="KW-1009">Hearing</keyword>
<keyword id="KW-0472">Membrane</keyword>
<keyword id="KW-0576">Peroxisome</keyword>
<keyword id="KW-1185">Reference proteome</keyword>
<proteinExistence type="evidence at protein level"/>
<comment type="function">
    <text evidence="3 6">Peroxisome-associated protein required to protect auditory hair cells against noise-induced damage (PubMed:26544938, PubMed:30936319). Acts by regulating noise-induced peroxisome proliferation in auditory hair cells and neurons, and promoting autophagic degradation of damaged peroxisomes (pexophagy) (PubMed:26544938, PubMed:30936319). Noise overexposure increases reactive oxygen species (ROS) levels, causing oxidative damage to auditory hair cells and resulting in hearing loss (PubMed:30936319). PJVK acts as a ROS sensor that recruits the autophagy machinery to trigger pexophagy of peroxisomes damaged by oxidative stress (PubMed:30936319). In addition to pexophagy, also required to promote peroxisome proliferation in response to sound overstimulation (PubMed:26544938, PubMed:30936319).</text>
</comment>
<comment type="subunit">
    <text evidence="4 5 6">Interacts with MAP1LC3B; interaction is direct (PubMed:30936319). Interacts with IQGAP1 (PubMed:28089576). Interacts with ROCK2 (PubMed:28089576). Interacts with TRIOBP (PubMed:28209736).</text>
</comment>
<comment type="subcellular location">
    <subcellularLocation>
        <location evidence="3">Peroxisome membrane</location>
    </subcellularLocation>
    <subcellularLocation>
        <location evidence="5">Cell projection</location>
        <location evidence="5">Cilium</location>
    </subcellularLocation>
    <text evidence="3 5">Associates with the peroxisomal membrane; it is unclear whether it is embedded or just associated with the peroxisomal membrane (PubMed:26544938). Localizes to ciliary rootlet (PubMed:28209736).</text>
</comment>
<comment type="tissue specificity">
    <text evidence="1 2 4">In ear, it is detected in the organ of Corti and the spiral ganglion within the cochlea in the sensory areas of the vestibule (cristae ampullares of the semicircular ducts, and maculae of the saccule and utricle) and in the first 3 relays (cochlear nuclei, superior olivary complex and inferior colliculus) of the afferent auditory pathway (PubMed:16804542). Detected in hair cells of the cochlea and vestibule but not in neurons (PubMed:17329413, PubMed:28089576). In the afferent auditory pathway, it is present in the cell bodies of neurons but not in fiber bundles such as the trapezoid body in the brainstem (PubMed:16804542). Also detected in spiral ganglion cells, which form the auditory nerve and project to the cochlear nuclei in the brainstem (PubMed:16804542). Also present in the cochlear nuclei, the superior olive and the inferior colliculus (at protein level) (PubMed:16804542). Expressed in all the adult organs tested: brain, eye, inner ear, heart, lung, kidney, liver, intestine, testis and weakly in skeletal muscle (PubMed:16804542).</text>
</comment>
<comment type="induction">
    <text evidence="3">By noise exposure.</text>
</comment>
<comment type="disruption phenotype">
    <text evidence="2 3 4 5">Mice display progressive hearing loss caused by hypervulnerability to sound exposure (PubMed:17329413, PubMed:26544938). Cochleas display features of marked oxidative stress and impaired antioxidant defenses, and peroxisomes in hair cells show structural abnormalities after the onset of hearing (PubMed:26544938). Mice with conditional deletion in all sensory hair cells show auditory phenotypes with early-onset profound hearing loss and outer hair cell degeneration (PubMed:28089576, PubMed:28209736). Mice with conditional deletion in outer hair cells show auditory phenotypes with early-onset profound hearing loss (PubMed:28089576). Conditional deletion in adult outer hair cells causes a slowly progressive hearing loss associated with outer hair cells degeneration and delayed loss of inner hair cells (PubMed:28089576).</text>
</comment>
<comment type="similarity">
    <text evidence="9">Belongs to the gasdermin family.</text>
</comment>
<organism>
    <name type="scientific">Mus musculus</name>
    <name type="common">Mouse</name>
    <dbReference type="NCBI Taxonomy" id="10090"/>
    <lineage>
        <taxon>Eukaryota</taxon>
        <taxon>Metazoa</taxon>
        <taxon>Chordata</taxon>
        <taxon>Craniata</taxon>
        <taxon>Vertebrata</taxon>
        <taxon>Euteleostomi</taxon>
        <taxon>Mammalia</taxon>
        <taxon>Eutheria</taxon>
        <taxon>Euarchontoglires</taxon>
        <taxon>Glires</taxon>
        <taxon>Rodentia</taxon>
        <taxon>Myomorpha</taxon>
        <taxon>Muroidea</taxon>
        <taxon>Muridae</taxon>
        <taxon>Murinae</taxon>
        <taxon>Mus</taxon>
        <taxon>Mus</taxon>
    </lineage>
</organism>
<protein>
    <recommendedName>
        <fullName evidence="7">Pejvakin</fullName>
    </recommendedName>
    <alternativeName>
        <fullName evidence="8">Protein sirtaki</fullName>
    </alternativeName>
</protein>
<sequence length="352" mass="39858">MFAAATKSFVKQVGDGGRLVPVPSLSEADKYQPLSLVVKKKRCFLFPRCKFTSTPFTLKDILLGDREISAGISSYQLLNYEDESDVSLYGRRSNHIVNDVGINVTGSDSIAVKASFGVVTKHEVEVSTLLKEITARKINFDHSLIRQSRSSRKAVLCVVMESIRTTRQCSLSVHAGIRGEAMRFHFMDEQNPKGREKAIVFPAHTTIAFSVFELFIYLDGAFDICVTSVSKGGFEREETTTFAMFYRLRNILFERNRRVMDAISRSQLYLDDLFSDFYDKPLSMTDISLKEGTHIRVNLLNHNIPKGPCILCGMGNLKRETVYGCFQCSVDGVKYVRLHAVPCFDIWHKRMK</sequence>
<name>PJVK_MOUSE</name>
<evidence type="ECO:0000269" key="1">
    <source>
    </source>
</evidence>
<evidence type="ECO:0000269" key="2">
    <source>
    </source>
</evidence>
<evidence type="ECO:0000269" key="3">
    <source>
    </source>
</evidence>
<evidence type="ECO:0000269" key="4">
    <source>
    </source>
</evidence>
<evidence type="ECO:0000269" key="5">
    <source>
    </source>
</evidence>
<evidence type="ECO:0000269" key="6">
    <source>
    </source>
</evidence>
<evidence type="ECO:0000303" key="7">
    <source>
    </source>
</evidence>
<evidence type="ECO:0000303" key="8">
    <source>
    </source>
</evidence>
<evidence type="ECO:0000305" key="9"/>
<evidence type="ECO:0000312" key="10">
    <source>
        <dbReference type="MGI" id="MGI:2685847"/>
    </source>
</evidence>
<accession>Q0ZLH2</accession>
<dbReference type="EMBL" id="DQ365828">
    <property type="protein sequence ID" value="ABC94895.1"/>
    <property type="molecule type" value="mRNA"/>
</dbReference>
<dbReference type="CCDS" id="CCDS38153.1"/>
<dbReference type="RefSeq" id="NP_001074180.1">
    <property type="nucleotide sequence ID" value="NM_001080711.2"/>
</dbReference>
<dbReference type="FunCoup" id="Q0ZLH2">
    <property type="interactions" value="145"/>
</dbReference>
<dbReference type="STRING" id="10090.ENSMUSP00000097566"/>
<dbReference type="PhosphoSitePlus" id="Q0ZLH2"/>
<dbReference type="PaxDb" id="10090-ENSMUSP00000097566"/>
<dbReference type="Antibodypedia" id="33935">
    <property type="antibodies" value="67 antibodies from 16 providers"/>
</dbReference>
<dbReference type="DNASU" id="381375"/>
<dbReference type="Ensembl" id="ENSMUST00000099986.3">
    <property type="protein sequence ID" value="ENSMUSP00000097566.3"/>
    <property type="gene ID" value="ENSMUSG00000075267.10"/>
</dbReference>
<dbReference type="GeneID" id="381375"/>
<dbReference type="KEGG" id="mmu:381375"/>
<dbReference type="UCSC" id="uc008kfg.2">
    <property type="organism name" value="mouse"/>
</dbReference>
<dbReference type="AGR" id="MGI:2685847"/>
<dbReference type="CTD" id="494513"/>
<dbReference type="MGI" id="MGI:2685847">
    <property type="gene designation" value="Pjvk"/>
</dbReference>
<dbReference type="VEuPathDB" id="HostDB:ENSMUSG00000075267"/>
<dbReference type="eggNOG" id="ENOG502QWBQ">
    <property type="taxonomic scope" value="Eukaryota"/>
</dbReference>
<dbReference type="GeneTree" id="ENSGT00950000183140"/>
<dbReference type="InParanoid" id="Q0ZLH2"/>
<dbReference type="OMA" id="IMNDVGF"/>
<dbReference type="OrthoDB" id="9436533at2759"/>
<dbReference type="PhylomeDB" id="Q0ZLH2"/>
<dbReference type="TreeFam" id="TF352821"/>
<dbReference type="BioGRID-ORCS" id="381375">
    <property type="hits" value="1 hit in 77 CRISPR screens"/>
</dbReference>
<dbReference type="PRO" id="PR:Q0ZLH2"/>
<dbReference type="Proteomes" id="UP000000589">
    <property type="component" value="Chromosome 2"/>
</dbReference>
<dbReference type="RNAct" id="Q0ZLH2">
    <property type="molecule type" value="protein"/>
</dbReference>
<dbReference type="Bgee" id="ENSMUSG00000075267">
    <property type="expression patterns" value="Expressed in mesodermal cell in embryo and 32 other cell types or tissues"/>
</dbReference>
<dbReference type="ExpressionAtlas" id="Q0ZLH2">
    <property type="expression patterns" value="baseline and differential"/>
</dbReference>
<dbReference type="GO" id="GO:0035253">
    <property type="term" value="C:ciliary rootlet"/>
    <property type="evidence" value="ECO:0000314"/>
    <property type="project" value="MGI"/>
</dbReference>
<dbReference type="GO" id="GO:0030864">
    <property type="term" value="C:cortical actin cytoskeleton"/>
    <property type="evidence" value="ECO:0000314"/>
    <property type="project" value="MGI"/>
</dbReference>
<dbReference type="GO" id="GO:0005737">
    <property type="term" value="C:cytoplasm"/>
    <property type="evidence" value="ECO:0000314"/>
    <property type="project" value="MGI"/>
</dbReference>
<dbReference type="GO" id="GO:0005829">
    <property type="term" value="C:cytosol"/>
    <property type="evidence" value="ECO:0000304"/>
    <property type="project" value="Reactome"/>
</dbReference>
<dbReference type="GO" id="GO:0043025">
    <property type="term" value="C:neuronal cell body"/>
    <property type="evidence" value="ECO:0000314"/>
    <property type="project" value="MGI"/>
</dbReference>
<dbReference type="GO" id="GO:0005778">
    <property type="term" value="C:peroxisomal membrane"/>
    <property type="evidence" value="ECO:0000314"/>
    <property type="project" value="UniProtKB"/>
</dbReference>
<dbReference type="GO" id="GO:0120044">
    <property type="term" value="C:stereocilium base"/>
    <property type="evidence" value="ECO:0000314"/>
    <property type="project" value="MGI"/>
</dbReference>
<dbReference type="GO" id="GO:0050910">
    <property type="term" value="P:detection of mechanical stimulus involved in sensory perception of sound"/>
    <property type="evidence" value="ECO:0000315"/>
    <property type="project" value="MGI"/>
</dbReference>
<dbReference type="GO" id="GO:0000425">
    <property type="term" value="P:pexophagy"/>
    <property type="evidence" value="ECO:0000315"/>
    <property type="project" value="UniProtKB"/>
</dbReference>
<dbReference type="GO" id="GO:0097468">
    <property type="term" value="P:programmed cell death in response to reactive oxygen species"/>
    <property type="evidence" value="ECO:0000315"/>
    <property type="project" value="UniProtKB"/>
</dbReference>
<dbReference type="GO" id="GO:1900063">
    <property type="term" value="P:regulation of peroxisome organization"/>
    <property type="evidence" value="ECO:0000315"/>
    <property type="project" value="UniProtKB"/>
</dbReference>
<dbReference type="GO" id="GO:0000302">
    <property type="term" value="P:response to reactive oxygen species"/>
    <property type="evidence" value="ECO:0000315"/>
    <property type="project" value="UniProtKB"/>
</dbReference>
<dbReference type="GO" id="GO:0007605">
    <property type="term" value="P:sensory perception of sound"/>
    <property type="evidence" value="ECO:0000315"/>
    <property type="project" value="UniProtKB"/>
</dbReference>
<dbReference type="GO" id="GO:0120045">
    <property type="term" value="P:stereocilium maintenance"/>
    <property type="evidence" value="ECO:0000315"/>
    <property type="project" value="MGI"/>
</dbReference>
<dbReference type="InterPro" id="IPR040460">
    <property type="entry name" value="Gasdermin_pore"/>
</dbReference>
<dbReference type="InterPro" id="IPR042377">
    <property type="entry name" value="GSDME"/>
</dbReference>
<dbReference type="PANTHER" id="PTHR15207">
    <property type="entry name" value="NONSYNDROMIC HEARING IMPAIRMENT PROTEIN"/>
    <property type="match status" value="1"/>
</dbReference>
<dbReference type="PANTHER" id="PTHR15207:SF2">
    <property type="entry name" value="PEJVAKIN"/>
    <property type="match status" value="1"/>
</dbReference>
<dbReference type="Pfam" id="PF04598">
    <property type="entry name" value="Gasdermin"/>
    <property type="match status" value="1"/>
</dbReference>
<reference key="1">
    <citation type="journal article" date="2006" name="Nat. Genet.">
        <title>Mutations in the gene encoding pejvakin, a newly identified protein of the afferent auditory pathway, cause DFNB59 auditory neuropathy.</title>
        <authorList>
            <person name="Delmaghani S."/>
            <person name="Del Castillo F.J."/>
            <person name="Michel V."/>
            <person name="Leibovici M."/>
            <person name="Aghaie A."/>
            <person name="Ron U."/>
            <person name="Van Laer L."/>
            <person name="Ben-Tal N."/>
            <person name="Van Camp G."/>
            <person name="Weil D."/>
            <person name="Langa F."/>
            <person name="Lathrop M."/>
            <person name="Avan P."/>
            <person name="Petit C."/>
        </authorList>
    </citation>
    <scope>NUCLEOTIDE SEQUENCE [MRNA]</scope>
    <scope>TISSUE SPECIFICITY</scope>
    <scope>MUTAGENESIS OF ARG-183</scope>
</reference>
<reference key="2">
    <citation type="journal article" date="2007" name="J. Neurosci.">
        <title>A forward genetics screen in mice identifies recessive deafness traits and reveals that pejvakin is essential for outer hair cell function.</title>
        <authorList>
            <person name="Schwander M."/>
            <person name="Sczaniecka A."/>
            <person name="Grillet N."/>
            <person name="Bailey J.S."/>
            <person name="Avenarius M."/>
            <person name="Najmabadi H."/>
            <person name="Steffy B.M."/>
            <person name="Federe G.C."/>
            <person name="Lagler E.A."/>
            <person name="Banan R."/>
            <person name="Hice R."/>
            <person name="Grabowski-Boase L."/>
            <person name="Keithley E.M."/>
            <person name="Ryan A.F."/>
            <person name="Housley G.D."/>
            <person name="Wiltshire T."/>
            <person name="Smith R.J."/>
            <person name="Tarantino L.M."/>
            <person name="Mueller U."/>
        </authorList>
    </citation>
    <scope>TISSUE SPECIFICITY</scope>
    <scope>DISRUPTION PHENOTYPE</scope>
</reference>
<reference key="3">
    <citation type="journal article" date="2015" name="Cell">
        <title>Hypervulnerability to sound exposure through impaired adaptive proliferation of peroxisomes.</title>
        <authorList>
            <person name="Delmaghani S."/>
            <person name="Defourny J."/>
            <person name="Aghaie A."/>
            <person name="Beurg M."/>
            <person name="Dulon D."/>
            <person name="Thelen N."/>
            <person name="Perfettini I."/>
            <person name="Zelles T."/>
            <person name="Aller M."/>
            <person name="Meyer A."/>
            <person name="Emptoz A."/>
            <person name="Giraudet F."/>
            <person name="Leibovici M."/>
            <person name="Dartevelle S."/>
            <person name="Soubigou G."/>
            <person name="Thiry M."/>
            <person name="Vizi E.S."/>
            <person name="Safieddine S."/>
            <person name="Hardelin J.P."/>
            <person name="Avan P."/>
            <person name="Petit C."/>
        </authorList>
    </citation>
    <scope>FUNCTION</scope>
    <scope>DISRUPTION PHENOTYPE</scope>
    <scope>SUBCELLULAR LOCATION</scope>
    <scope>INDUCTION</scope>
</reference>
<reference key="4">
    <citation type="journal article" date="2017" name="J. Neurosci.">
        <title>Pejvakin, a candidate stereociliary rootlet protein, regulates hair cell function in a cell-autonomous manner.</title>
        <authorList>
            <person name="Kazmierczak M."/>
            <person name="Kazmierczak P."/>
            <person name="Peng A.W."/>
            <person name="Harris S.L."/>
            <person name="Shah P."/>
            <person name="Puel J.L."/>
            <person name="Lenoir M."/>
            <person name="Franco S.J."/>
            <person name="Schwander M."/>
        </authorList>
    </citation>
    <scope>SUBCELLULAR LOCATION</scope>
    <scope>DISRUPTION PHENOTYPE</scope>
    <scope>INTERACTION WITH TRIOBP</scope>
</reference>
<reference key="5">
    <citation type="journal article" date="2017" name="Neuroscience">
        <title>Conditional deletion of pejvakin in adult outer hair cells causes progressive hearing loss in mice.</title>
        <authorList>
            <person name="Harris S.L."/>
            <person name="Kazmierczak M."/>
            <person name="Pangrsic T."/>
            <person name="Shah P."/>
            <person name="Chuchvara N."/>
            <person name="Barrantes-Freer A."/>
            <person name="Moser T."/>
            <person name="Schwander M."/>
        </authorList>
    </citation>
    <scope>DISRUPTION PHENOTYPE</scope>
    <scope>TISSUE SPECIFICITY</scope>
    <scope>INTERACTION WITH IQGAP1 AND ROCK2</scope>
</reference>
<reference key="6">
    <citation type="journal article" date="2019" name="Proc. Natl. Acad. Sci. U.S.A.">
        <title>Pejvakin-mediated pexophagy protects auditory hair cells against noise-induced damage.</title>
        <authorList>
            <person name="Defourny J."/>
            <person name="Aghaie A."/>
            <person name="Perfettini I."/>
            <person name="Avan P."/>
            <person name="Delmaghani S."/>
            <person name="Petit C."/>
        </authorList>
    </citation>
    <scope>FUNCTION</scope>
    <scope>INTERACTION WITH MAP1LC3B</scope>
    <scope>MUTAGENESIS OF CYS-309; CYS-312; CYS-325; CYS-328 AND CYS-343</scope>
</reference>
<feature type="chain" id="PRO_0000249043" description="Pejvakin">
    <location>
        <begin position="1"/>
        <end position="352"/>
    </location>
</feature>
<feature type="mutagenesis site" description="Induces abnormal auditory brainstem responses indicative of neuronal dysfunction along the auditory pathway." evidence="1">
    <original>R</original>
    <variation>W</variation>
    <location>
        <position position="183"/>
    </location>
</feature>
<feature type="mutagenesis site" description="Does not affect interaction with MAP1LC3B." evidence="6">
    <original>C</original>
    <variation>S</variation>
    <location>
        <position position="309"/>
    </location>
</feature>
<feature type="mutagenesis site" description="Does not affect interaction with MAP1LC3B." evidence="6">
    <original>C</original>
    <variation>S</variation>
    <location>
        <position position="312"/>
    </location>
</feature>
<feature type="mutagenesis site" description="Does not affect interaction with MAP1LC3B." evidence="6">
    <original>C</original>
    <variation>S</variation>
    <location>
        <position position="325"/>
    </location>
</feature>
<feature type="mutagenesis site" description="Abolished interaction with MAP1LC3B and subsequent pexophagy." evidence="6">
    <original>C</original>
    <variation>S</variation>
    <location>
        <position position="328"/>
    </location>
</feature>
<feature type="mutagenesis site" description="Abolished interaction with MAP1LC3B and subsequent pexophagy." evidence="6">
    <original>C</original>
    <variation>S</variation>
    <location>
        <position position="343"/>
    </location>
</feature>
<gene>
    <name evidence="7 10" type="primary">Pjvk</name>
    <name evidence="7" type="synonym">Dfnb59</name>
    <name evidence="10" type="synonym">Gm1001</name>
</gene>